<accession>Q3AF02</accession>
<evidence type="ECO:0000255" key="1">
    <source>
        <dbReference type="HAMAP-Rule" id="MF_00358"/>
    </source>
</evidence>
<evidence type="ECO:0000256" key="2">
    <source>
        <dbReference type="SAM" id="MobiDB-lite"/>
    </source>
</evidence>
<evidence type="ECO:0000305" key="3"/>
<organism>
    <name type="scientific">Carboxydothermus hydrogenoformans (strain ATCC BAA-161 / DSM 6008 / Z-2901)</name>
    <dbReference type="NCBI Taxonomy" id="246194"/>
    <lineage>
        <taxon>Bacteria</taxon>
        <taxon>Bacillati</taxon>
        <taxon>Bacillota</taxon>
        <taxon>Clostridia</taxon>
        <taxon>Thermoanaerobacterales</taxon>
        <taxon>Thermoanaerobacteraceae</taxon>
        <taxon>Carboxydothermus</taxon>
    </lineage>
</organism>
<dbReference type="EMBL" id="CP000141">
    <property type="protein sequence ID" value="ABB14664.1"/>
    <property type="molecule type" value="Genomic_DNA"/>
</dbReference>
<dbReference type="RefSeq" id="WP_011343358.1">
    <property type="nucleotide sequence ID" value="NC_007503.1"/>
</dbReference>
<dbReference type="SMR" id="Q3AF02"/>
<dbReference type="FunCoup" id="Q3AF02">
    <property type="interactions" value="255"/>
</dbReference>
<dbReference type="STRING" id="246194.CHY_0421"/>
<dbReference type="KEGG" id="chy:CHY_0421"/>
<dbReference type="eggNOG" id="COG0828">
    <property type="taxonomic scope" value="Bacteria"/>
</dbReference>
<dbReference type="HOGENOM" id="CLU_159258_1_2_9"/>
<dbReference type="InParanoid" id="Q3AF02"/>
<dbReference type="OrthoDB" id="9799244at2"/>
<dbReference type="Proteomes" id="UP000002706">
    <property type="component" value="Chromosome"/>
</dbReference>
<dbReference type="GO" id="GO:1990904">
    <property type="term" value="C:ribonucleoprotein complex"/>
    <property type="evidence" value="ECO:0007669"/>
    <property type="project" value="UniProtKB-KW"/>
</dbReference>
<dbReference type="GO" id="GO:0005840">
    <property type="term" value="C:ribosome"/>
    <property type="evidence" value="ECO:0007669"/>
    <property type="project" value="UniProtKB-KW"/>
</dbReference>
<dbReference type="GO" id="GO:0003735">
    <property type="term" value="F:structural constituent of ribosome"/>
    <property type="evidence" value="ECO:0007669"/>
    <property type="project" value="InterPro"/>
</dbReference>
<dbReference type="GO" id="GO:0006412">
    <property type="term" value="P:translation"/>
    <property type="evidence" value="ECO:0007669"/>
    <property type="project" value="UniProtKB-UniRule"/>
</dbReference>
<dbReference type="Gene3D" id="1.20.5.1150">
    <property type="entry name" value="Ribosomal protein S8"/>
    <property type="match status" value="1"/>
</dbReference>
<dbReference type="HAMAP" id="MF_00358">
    <property type="entry name" value="Ribosomal_bS21"/>
    <property type="match status" value="1"/>
</dbReference>
<dbReference type="InterPro" id="IPR001911">
    <property type="entry name" value="Ribosomal_bS21"/>
</dbReference>
<dbReference type="InterPro" id="IPR018278">
    <property type="entry name" value="Ribosomal_bS21_CS"/>
</dbReference>
<dbReference type="InterPro" id="IPR038380">
    <property type="entry name" value="Ribosomal_bS21_sf"/>
</dbReference>
<dbReference type="NCBIfam" id="TIGR00030">
    <property type="entry name" value="S21p"/>
    <property type="match status" value="1"/>
</dbReference>
<dbReference type="PANTHER" id="PTHR21109">
    <property type="entry name" value="MITOCHONDRIAL 28S RIBOSOMAL PROTEIN S21"/>
    <property type="match status" value="1"/>
</dbReference>
<dbReference type="PANTHER" id="PTHR21109:SF22">
    <property type="entry name" value="SMALL RIBOSOMAL SUBUNIT PROTEIN BS21"/>
    <property type="match status" value="1"/>
</dbReference>
<dbReference type="Pfam" id="PF01165">
    <property type="entry name" value="Ribosomal_S21"/>
    <property type="match status" value="1"/>
</dbReference>
<dbReference type="PRINTS" id="PR00976">
    <property type="entry name" value="RIBOSOMALS21"/>
</dbReference>
<dbReference type="PROSITE" id="PS01181">
    <property type="entry name" value="RIBOSOMAL_S21"/>
    <property type="match status" value="1"/>
</dbReference>
<comment type="similarity">
    <text evidence="1">Belongs to the bacterial ribosomal protein bS21 family.</text>
</comment>
<protein>
    <recommendedName>
        <fullName evidence="1">Small ribosomal subunit protein bS21</fullName>
    </recommendedName>
    <alternativeName>
        <fullName evidence="3">30S ribosomal protein S21</fullName>
    </alternativeName>
</protein>
<keyword id="KW-1185">Reference proteome</keyword>
<keyword id="KW-0687">Ribonucleoprotein</keyword>
<keyword id="KW-0689">Ribosomal protein</keyword>
<name>RS21_CARHZ</name>
<feature type="chain" id="PRO_0000266650" description="Small ribosomal subunit protein bS21">
    <location>
        <begin position="1"/>
        <end position="59"/>
    </location>
</feature>
<feature type="region of interest" description="Disordered" evidence="2">
    <location>
        <begin position="27"/>
        <end position="59"/>
    </location>
</feature>
<feature type="compositionally biased region" description="Basic and acidic residues" evidence="2">
    <location>
        <begin position="31"/>
        <end position="42"/>
    </location>
</feature>
<feature type="compositionally biased region" description="Basic residues" evidence="2">
    <location>
        <begin position="43"/>
        <end position="59"/>
    </location>
</feature>
<reference key="1">
    <citation type="journal article" date="2005" name="PLoS Genet.">
        <title>Life in hot carbon monoxide: the complete genome sequence of Carboxydothermus hydrogenoformans Z-2901.</title>
        <authorList>
            <person name="Wu M."/>
            <person name="Ren Q."/>
            <person name="Durkin A.S."/>
            <person name="Daugherty S.C."/>
            <person name="Brinkac L.M."/>
            <person name="Dodson R.J."/>
            <person name="Madupu R."/>
            <person name="Sullivan S.A."/>
            <person name="Kolonay J.F."/>
            <person name="Nelson W.C."/>
            <person name="Tallon L.J."/>
            <person name="Jones K.M."/>
            <person name="Ulrich L.E."/>
            <person name="Gonzalez J.M."/>
            <person name="Zhulin I.B."/>
            <person name="Robb F.T."/>
            <person name="Eisen J.A."/>
        </authorList>
    </citation>
    <scope>NUCLEOTIDE SEQUENCE [LARGE SCALE GENOMIC DNA]</scope>
    <source>
        <strain>ATCC BAA-161 / DSM 6008 / Z-2901</strain>
    </source>
</reference>
<gene>
    <name evidence="1" type="primary">rpsU</name>
    <name type="ordered locus">CHY_0421</name>
</gene>
<sequence length="59" mass="7036">MAEVRVGKNESLDSALRRFKRSCQKAGLMAEMRKREHYEKPSVRRKKKAQARNKKKRYA</sequence>
<proteinExistence type="inferred from homology"/>